<feature type="chain" id="PRO_0000306708" description="Small ribosomal subunit protein uS13">
    <location>
        <begin position="1"/>
        <end position="118"/>
    </location>
</feature>
<feature type="region of interest" description="Disordered" evidence="2">
    <location>
        <begin position="94"/>
        <end position="118"/>
    </location>
</feature>
<comment type="function">
    <text evidence="1">Located at the top of the head of the 30S subunit, it contacts several helices of the 16S rRNA. In the 70S ribosome it contacts the 23S rRNA (bridge B1a) and protein L5 of the 50S subunit (bridge B1b), connecting the 2 subunits; these bridges are implicated in subunit movement. Contacts the tRNAs in the A and P-sites.</text>
</comment>
<comment type="subunit">
    <text evidence="1">Part of the 30S ribosomal subunit. Forms a loose heterodimer with protein S19. Forms two bridges to the 50S subunit in the 70S ribosome.</text>
</comment>
<comment type="similarity">
    <text evidence="1">Belongs to the universal ribosomal protein uS13 family.</text>
</comment>
<proteinExistence type="inferred from homology"/>
<name>RS13_SHESR</name>
<sequence>MARIAGINIPDQKHTVIALTAIFGIGRTRARAICAATSIAETAKIKELSEAQIDTLREEVAKYLVEGDLRREISMNIKRLMDLGCYRGLRHRRSLPLRGQRTKTNARTRKGPRKPIKK</sequence>
<protein>
    <recommendedName>
        <fullName evidence="1">Small ribosomal subunit protein uS13</fullName>
    </recommendedName>
    <alternativeName>
        <fullName evidence="3">30S ribosomal protein S13</fullName>
    </alternativeName>
</protein>
<evidence type="ECO:0000255" key="1">
    <source>
        <dbReference type="HAMAP-Rule" id="MF_01315"/>
    </source>
</evidence>
<evidence type="ECO:0000256" key="2">
    <source>
        <dbReference type="SAM" id="MobiDB-lite"/>
    </source>
</evidence>
<evidence type="ECO:0000305" key="3"/>
<gene>
    <name evidence="1" type="primary">rpsM</name>
    <name type="ordered locus">Shewmr7_0216</name>
</gene>
<keyword id="KW-0687">Ribonucleoprotein</keyword>
<keyword id="KW-0689">Ribosomal protein</keyword>
<keyword id="KW-0694">RNA-binding</keyword>
<keyword id="KW-0699">rRNA-binding</keyword>
<keyword id="KW-0820">tRNA-binding</keyword>
<dbReference type="EMBL" id="CP000444">
    <property type="protein sequence ID" value="ABI41222.1"/>
    <property type="molecule type" value="Genomic_DNA"/>
</dbReference>
<dbReference type="SMR" id="Q0I083"/>
<dbReference type="KEGG" id="shm:Shewmr7_0216"/>
<dbReference type="HOGENOM" id="CLU_103849_1_2_6"/>
<dbReference type="GO" id="GO:0005829">
    <property type="term" value="C:cytosol"/>
    <property type="evidence" value="ECO:0007669"/>
    <property type="project" value="TreeGrafter"/>
</dbReference>
<dbReference type="GO" id="GO:0015935">
    <property type="term" value="C:small ribosomal subunit"/>
    <property type="evidence" value="ECO:0007669"/>
    <property type="project" value="TreeGrafter"/>
</dbReference>
<dbReference type="GO" id="GO:0019843">
    <property type="term" value="F:rRNA binding"/>
    <property type="evidence" value="ECO:0007669"/>
    <property type="project" value="UniProtKB-UniRule"/>
</dbReference>
<dbReference type="GO" id="GO:0003735">
    <property type="term" value="F:structural constituent of ribosome"/>
    <property type="evidence" value="ECO:0007669"/>
    <property type="project" value="InterPro"/>
</dbReference>
<dbReference type="GO" id="GO:0000049">
    <property type="term" value="F:tRNA binding"/>
    <property type="evidence" value="ECO:0007669"/>
    <property type="project" value="UniProtKB-UniRule"/>
</dbReference>
<dbReference type="GO" id="GO:0006412">
    <property type="term" value="P:translation"/>
    <property type="evidence" value="ECO:0007669"/>
    <property type="project" value="UniProtKB-UniRule"/>
</dbReference>
<dbReference type="FunFam" id="1.10.8.50:FF:000001">
    <property type="entry name" value="30S ribosomal protein S13"/>
    <property type="match status" value="1"/>
</dbReference>
<dbReference type="FunFam" id="4.10.910.10:FF:000001">
    <property type="entry name" value="30S ribosomal protein S13"/>
    <property type="match status" value="1"/>
</dbReference>
<dbReference type="Gene3D" id="1.10.8.50">
    <property type="match status" value="1"/>
</dbReference>
<dbReference type="Gene3D" id="4.10.910.10">
    <property type="entry name" value="30s ribosomal protein s13, domain 2"/>
    <property type="match status" value="1"/>
</dbReference>
<dbReference type="HAMAP" id="MF_01315">
    <property type="entry name" value="Ribosomal_uS13"/>
    <property type="match status" value="1"/>
</dbReference>
<dbReference type="InterPro" id="IPR027437">
    <property type="entry name" value="Rbsml_uS13_C"/>
</dbReference>
<dbReference type="InterPro" id="IPR001892">
    <property type="entry name" value="Ribosomal_uS13"/>
</dbReference>
<dbReference type="InterPro" id="IPR010979">
    <property type="entry name" value="Ribosomal_uS13-like_H2TH"/>
</dbReference>
<dbReference type="InterPro" id="IPR019980">
    <property type="entry name" value="Ribosomal_uS13_bac-type"/>
</dbReference>
<dbReference type="InterPro" id="IPR018269">
    <property type="entry name" value="Ribosomal_uS13_CS"/>
</dbReference>
<dbReference type="NCBIfam" id="TIGR03631">
    <property type="entry name" value="uS13_bact"/>
    <property type="match status" value="1"/>
</dbReference>
<dbReference type="PANTHER" id="PTHR10871">
    <property type="entry name" value="30S RIBOSOMAL PROTEIN S13/40S RIBOSOMAL PROTEIN S18"/>
    <property type="match status" value="1"/>
</dbReference>
<dbReference type="PANTHER" id="PTHR10871:SF1">
    <property type="entry name" value="SMALL RIBOSOMAL SUBUNIT PROTEIN US13M"/>
    <property type="match status" value="1"/>
</dbReference>
<dbReference type="Pfam" id="PF00416">
    <property type="entry name" value="Ribosomal_S13"/>
    <property type="match status" value="1"/>
</dbReference>
<dbReference type="PIRSF" id="PIRSF002134">
    <property type="entry name" value="Ribosomal_S13"/>
    <property type="match status" value="1"/>
</dbReference>
<dbReference type="SUPFAM" id="SSF46946">
    <property type="entry name" value="S13-like H2TH domain"/>
    <property type="match status" value="1"/>
</dbReference>
<dbReference type="PROSITE" id="PS00646">
    <property type="entry name" value="RIBOSOMAL_S13_1"/>
    <property type="match status" value="1"/>
</dbReference>
<dbReference type="PROSITE" id="PS50159">
    <property type="entry name" value="RIBOSOMAL_S13_2"/>
    <property type="match status" value="1"/>
</dbReference>
<accession>Q0I083</accession>
<organism>
    <name type="scientific">Shewanella sp. (strain MR-7)</name>
    <dbReference type="NCBI Taxonomy" id="60481"/>
    <lineage>
        <taxon>Bacteria</taxon>
        <taxon>Pseudomonadati</taxon>
        <taxon>Pseudomonadota</taxon>
        <taxon>Gammaproteobacteria</taxon>
        <taxon>Alteromonadales</taxon>
        <taxon>Shewanellaceae</taxon>
        <taxon>Shewanella</taxon>
    </lineage>
</organism>
<reference key="1">
    <citation type="submission" date="2006-08" db="EMBL/GenBank/DDBJ databases">
        <title>Complete sequence of chromosome 1 of Shewanella sp. MR-7.</title>
        <authorList>
            <person name="Copeland A."/>
            <person name="Lucas S."/>
            <person name="Lapidus A."/>
            <person name="Barry K."/>
            <person name="Detter J.C."/>
            <person name="Glavina del Rio T."/>
            <person name="Hammon N."/>
            <person name="Israni S."/>
            <person name="Dalin E."/>
            <person name="Tice H."/>
            <person name="Pitluck S."/>
            <person name="Kiss H."/>
            <person name="Brettin T."/>
            <person name="Bruce D."/>
            <person name="Han C."/>
            <person name="Tapia R."/>
            <person name="Gilna P."/>
            <person name="Schmutz J."/>
            <person name="Larimer F."/>
            <person name="Land M."/>
            <person name="Hauser L."/>
            <person name="Kyrpides N."/>
            <person name="Mikhailova N."/>
            <person name="Nealson K."/>
            <person name="Konstantinidis K."/>
            <person name="Klappenbach J."/>
            <person name="Tiedje J."/>
            <person name="Richardson P."/>
        </authorList>
    </citation>
    <scope>NUCLEOTIDE SEQUENCE [LARGE SCALE GENOMIC DNA]</scope>
    <source>
        <strain>MR-7</strain>
    </source>
</reference>